<name>PYRG_HYPNA</name>
<dbReference type="EC" id="6.3.4.2" evidence="1"/>
<dbReference type="EMBL" id="CP000158">
    <property type="protein sequence ID" value="ABI78786.1"/>
    <property type="molecule type" value="Genomic_DNA"/>
</dbReference>
<dbReference type="RefSeq" id="WP_011646798.1">
    <property type="nucleotide sequence ID" value="NC_008358.1"/>
</dbReference>
<dbReference type="SMR" id="Q0C195"/>
<dbReference type="STRING" id="228405.HNE_1794"/>
<dbReference type="MEROPS" id="C26.964"/>
<dbReference type="KEGG" id="hne:HNE_1794"/>
<dbReference type="eggNOG" id="COG0504">
    <property type="taxonomic scope" value="Bacteria"/>
</dbReference>
<dbReference type="HOGENOM" id="CLU_011675_5_0_5"/>
<dbReference type="UniPathway" id="UPA00159">
    <property type="reaction ID" value="UER00277"/>
</dbReference>
<dbReference type="Proteomes" id="UP000001959">
    <property type="component" value="Chromosome"/>
</dbReference>
<dbReference type="GO" id="GO:0005829">
    <property type="term" value="C:cytosol"/>
    <property type="evidence" value="ECO:0007669"/>
    <property type="project" value="TreeGrafter"/>
</dbReference>
<dbReference type="GO" id="GO:0005524">
    <property type="term" value="F:ATP binding"/>
    <property type="evidence" value="ECO:0007669"/>
    <property type="project" value="UniProtKB-KW"/>
</dbReference>
<dbReference type="GO" id="GO:0003883">
    <property type="term" value="F:CTP synthase activity"/>
    <property type="evidence" value="ECO:0007669"/>
    <property type="project" value="UniProtKB-UniRule"/>
</dbReference>
<dbReference type="GO" id="GO:0004359">
    <property type="term" value="F:glutaminase activity"/>
    <property type="evidence" value="ECO:0007669"/>
    <property type="project" value="RHEA"/>
</dbReference>
<dbReference type="GO" id="GO:0042802">
    <property type="term" value="F:identical protein binding"/>
    <property type="evidence" value="ECO:0007669"/>
    <property type="project" value="TreeGrafter"/>
</dbReference>
<dbReference type="GO" id="GO:0046872">
    <property type="term" value="F:metal ion binding"/>
    <property type="evidence" value="ECO:0007669"/>
    <property type="project" value="UniProtKB-KW"/>
</dbReference>
<dbReference type="GO" id="GO:0044210">
    <property type="term" value="P:'de novo' CTP biosynthetic process"/>
    <property type="evidence" value="ECO:0007669"/>
    <property type="project" value="UniProtKB-UniRule"/>
</dbReference>
<dbReference type="GO" id="GO:0019856">
    <property type="term" value="P:pyrimidine nucleobase biosynthetic process"/>
    <property type="evidence" value="ECO:0007669"/>
    <property type="project" value="TreeGrafter"/>
</dbReference>
<dbReference type="CDD" id="cd03113">
    <property type="entry name" value="CTPS_N"/>
    <property type="match status" value="1"/>
</dbReference>
<dbReference type="CDD" id="cd01746">
    <property type="entry name" value="GATase1_CTP_Synthase"/>
    <property type="match status" value="1"/>
</dbReference>
<dbReference type="FunFam" id="3.40.50.300:FF:000009">
    <property type="entry name" value="CTP synthase"/>
    <property type="match status" value="1"/>
</dbReference>
<dbReference type="FunFam" id="3.40.50.880:FF:000002">
    <property type="entry name" value="CTP synthase"/>
    <property type="match status" value="1"/>
</dbReference>
<dbReference type="Gene3D" id="3.40.50.880">
    <property type="match status" value="1"/>
</dbReference>
<dbReference type="Gene3D" id="3.40.50.300">
    <property type="entry name" value="P-loop containing nucleotide triphosphate hydrolases"/>
    <property type="match status" value="1"/>
</dbReference>
<dbReference type="HAMAP" id="MF_01227">
    <property type="entry name" value="PyrG"/>
    <property type="match status" value="1"/>
</dbReference>
<dbReference type="InterPro" id="IPR029062">
    <property type="entry name" value="Class_I_gatase-like"/>
</dbReference>
<dbReference type="InterPro" id="IPR004468">
    <property type="entry name" value="CTP_synthase"/>
</dbReference>
<dbReference type="InterPro" id="IPR017456">
    <property type="entry name" value="CTP_synthase_N"/>
</dbReference>
<dbReference type="InterPro" id="IPR017926">
    <property type="entry name" value="GATASE"/>
</dbReference>
<dbReference type="InterPro" id="IPR033828">
    <property type="entry name" value="GATase1_CTP_Synthase"/>
</dbReference>
<dbReference type="InterPro" id="IPR027417">
    <property type="entry name" value="P-loop_NTPase"/>
</dbReference>
<dbReference type="NCBIfam" id="NF003792">
    <property type="entry name" value="PRK05380.1"/>
    <property type="match status" value="1"/>
</dbReference>
<dbReference type="NCBIfam" id="TIGR00337">
    <property type="entry name" value="PyrG"/>
    <property type="match status" value="1"/>
</dbReference>
<dbReference type="PANTHER" id="PTHR11550">
    <property type="entry name" value="CTP SYNTHASE"/>
    <property type="match status" value="1"/>
</dbReference>
<dbReference type="PANTHER" id="PTHR11550:SF0">
    <property type="entry name" value="CTP SYNTHASE-RELATED"/>
    <property type="match status" value="1"/>
</dbReference>
<dbReference type="Pfam" id="PF06418">
    <property type="entry name" value="CTP_synth_N"/>
    <property type="match status" value="1"/>
</dbReference>
<dbReference type="Pfam" id="PF00117">
    <property type="entry name" value="GATase"/>
    <property type="match status" value="1"/>
</dbReference>
<dbReference type="SUPFAM" id="SSF52317">
    <property type="entry name" value="Class I glutamine amidotransferase-like"/>
    <property type="match status" value="1"/>
</dbReference>
<dbReference type="SUPFAM" id="SSF52540">
    <property type="entry name" value="P-loop containing nucleoside triphosphate hydrolases"/>
    <property type="match status" value="1"/>
</dbReference>
<dbReference type="PROSITE" id="PS51273">
    <property type="entry name" value="GATASE_TYPE_1"/>
    <property type="match status" value="1"/>
</dbReference>
<comment type="function">
    <text evidence="1">Catalyzes the ATP-dependent amination of UTP to CTP with either L-glutamine or ammonia as the source of nitrogen. Regulates intracellular CTP levels through interactions with the four ribonucleotide triphosphates.</text>
</comment>
<comment type="catalytic activity">
    <reaction evidence="1">
        <text>UTP + L-glutamine + ATP + H2O = CTP + L-glutamate + ADP + phosphate + 2 H(+)</text>
        <dbReference type="Rhea" id="RHEA:26426"/>
        <dbReference type="ChEBI" id="CHEBI:15377"/>
        <dbReference type="ChEBI" id="CHEBI:15378"/>
        <dbReference type="ChEBI" id="CHEBI:29985"/>
        <dbReference type="ChEBI" id="CHEBI:30616"/>
        <dbReference type="ChEBI" id="CHEBI:37563"/>
        <dbReference type="ChEBI" id="CHEBI:43474"/>
        <dbReference type="ChEBI" id="CHEBI:46398"/>
        <dbReference type="ChEBI" id="CHEBI:58359"/>
        <dbReference type="ChEBI" id="CHEBI:456216"/>
        <dbReference type="EC" id="6.3.4.2"/>
    </reaction>
</comment>
<comment type="catalytic activity">
    <reaction evidence="1">
        <text>L-glutamine + H2O = L-glutamate + NH4(+)</text>
        <dbReference type="Rhea" id="RHEA:15889"/>
        <dbReference type="ChEBI" id="CHEBI:15377"/>
        <dbReference type="ChEBI" id="CHEBI:28938"/>
        <dbReference type="ChEBI" id="CHEBI:29985"/>
        <dbReference type="ChEBI" id="CHEBI:58359"/>
    </reaction>
</comment>
<comment type="catalytic activity">
    <reaction evidence="1">
        <text>UTP + NH4(+) + ATP = CTP + ADP + phosphate + 2 H(+)</text>
        <dbReference type="Rhea" id="RHEA:16597"/>
        <dbReference type="ChEBI" id="CHEBI:15378"/>
        <dbReference type="ChEBI" id="CHEBI:28938"/>
        <dbReference type="ChEBI" id="CHEBI:30616"/>
        <dbReference type="ChEBI" id="CHEBI:37563"/>
        <dbReference type="ChEBI" id="CHEBI:43474"/>
        <dbReference type="ChEBI" id="CHEBI:46398"/>
        <dbReference type="ChEBI" id="CHEBI:456216"/>
    </reaction>
</comment>
<comment type="activity regulation">
    <text evidence="1">Allosterically activated by GTP, when glutamine is the substrate; GTP has no effect on the reaction when ammonia is the substrate. The allosteric effector GTP functions by stabilizing the protein conformation that binds the tetrahedral intermediate(s) formed during glutamine hydrolysis. Inhibited by the product CTP, via allosteric rather than competitive inhibition.</text>
</comment>
<comment type="pathway">
    <text evidence="1">Pyrimidine metabolism; CTP biosynthesis via de novo pathway; CTP from UDP: step 2/2.</text>
</comment>
<comment type="subunit">
    <text evidence="1">Homotetramer.</text>
</comment>
<comment type="miscellaneous">
    <text evidence="1">CTPSs have evolved a hybrid strategy for distinguishing between UTP and CTP. The overlapping regions of the product feedback inhibitory and substrate sites recognize a common feature in both compounds, the triphosphate moiety. To differentiate isosteric substrate and product pyrimidine rings, an additional pocket far from the expected kinase/ligase catalytic site, specifically recognizes the cytosine and ribose portions of the product inhibitor.</text>
</comment>
<comment type="similarity">
    <text evidence="1">Belongs to the CTP synthase family.</text>
</comment>
<reference key="1">
    <citation type="journal article" date="2006" name="J. Bacteriol.">
        <title>Comparative genomic evidence for a close relationship between the dimorphic prosthecate bacteria Hyphomonas neptunium and Caulobacter crescentus.</title>
        <authorList>
            <person name="Badger J.H."/>
            <person name="Hoover T.R."/>
            <person name="Brun Y.V."/>
            <person name="Weiner R.M."/>
            <person name="Laub M.T."/>
            <person name="Alexandre G."/>
            <person name="Mrazek J."/>
            <person name="Ren Q."/>
            <person name="Paulsen I.T."/>
            <person name="Nelson K.E."/>
            <person name="Khouri H.M."/>
            <person name="Radune D."/>
            <person name="Sosa J."/>
            <person name="Dodson R.J."/>
            <person name="Sullivan S.A."/>
            <person name="Rosovitz M.J."/>
            <person name="Madupu R."/>
            <person name="Brinkac L.M."/>
            <person name="Durkin A.S."/>
            <person name="Daugherty S.C."/>
            <person name="Kothari S.P."/>
            <person name="Giglio M.G."/>
            <person name="Zhou L."/>
            <person name="Haft D.H."/>
            <person name="Selengut J.D."/>
            <person name="Davidsen T.M."/>
            <person name="Yang Q."/>
            <person name="Zafar N."/>
            <person name="Ward N.L."/>
        </authorList>
    </citation>
    <scope>NUCLEOTIDE SEQUENCE [LARGE SCALE GENOMIC DNA]</scope>
    <source>
        <strain>ATCC 15444</strain>
    </source>
</reference>
<keyword id="KW-0067">ATP-binding</keyword>
<keyword id="KW-0315">Glutamine amidotransferase</keyword>
<keyword id="KW-0436">Ligase</keyword>
<keyword id="KW-0460">Magnesium</keyword>
<keyword id="KW-0479">Metal-binding</keyword>
<keyword id="KW-0547">Nucleotide-binding</keyword>
<keyword id="KW-0665">Pyrimidine biosynthesis</keyword>
<keyword id="KW-1185">Reference proteome</keyword>
<gene>
    <name evidence="1" type="primary">pyrG</name>
    <name type="ordered locus">HNE_1794</name>
</gene>
<protein>
    <recommendedName>
        <fullName evidence="1">CTP synthase</fullName>
        <ecNumber evidence="1">6.3.4.2</ecNumber>
    </recommendedName>
    <alternativeName>
        <fullName evidence="1">Cytidine 5'-triphosphate synthase</fullName>
    </alternativeName>
    <alternativeName>
        <fullName evidence="1">Cytidine triphosphate synthetase</fullName>
        <shortName evidence="1">CTP synthetase</shortName>
        <shortName evidence="1">CTPS</shortName>
    </alternativeName>
    <alternativeName>
        <fullName evidence="1">UTP--ammonia ligase</fullName>
    </alternativeName>
</protein>
<proteinExistence type="inferred from homology"/>
<accession>Q0C195</accession>
<organism>
    <name type="scientific">Hyphomonas neptunium (strain ATCC 15444)</name>
    <dbReference type="NCBI Taxonomy" id="228405"/>
    <lineage>
        <taxon>Bacteria</taxon>
        <taxon>Pseudomonadati</taxon>
        <taxon>Pseudomonadota</taxon>
        <taxon>Alphaproteobacteria</taxon>
        <taxon>Hyphomonadales</taxon>
        <taxon>Hyphomonadaceae</taxon>
        <taxon>Hyphomonas</taxon>
    </lineage>
</organism>
<evidence type="ECO:0000255" key="1">
    <source>
        <dbReference type="HAMAP-Rule" id="MF_01227"/>
    </source>
</evidence>
<feature type="chain" id="PRO_0000266135" description="CTP synthase">
    <location>
        <begin position="1"/>
        <end position="544"/>
    </location>
</feature>
<feature type="domain" description="Glutamine amidotransferase type-1" evidence="1">
    <location>
        <begin position="292"/>
        <end position="543"/>
    </location>
</feature>
<feature type="region of interest" description="Amidoligase domain" evidence="1">
    <location>
        <begin position="1"/>
        <end position="266"/>
    </location>
</feature>
<feature type="active site" description="Nucleophile; for glutamine hydrolysis" evidence="1">
    <location>
        <position position="382"/>
    </location>
</feature>
<feature type="active site" evidence="1">
    <location>
        <position position="516"/>
    </location>
</feature>
<feature type="active site" evidence="1">
    <location>
        <position position="518"/>
    </location>
</feature>
<feature type="binding site" evidence="1">
    <location>
        <position position="13"/>
    </location>
    <ligand>
        <name>CTP</name>
        <dbReference type="ChEBI" id="CHEBI:37563"/>
        <note>allosteric inhibitor</note>
    </ligand>
</feature>
<feature type="binding site" evidence="1">
    <location>
        <position position="13"/>
    </location>
    <ligand>
        <name>UTP</name>
        <dbReference type="ChEBI" id="CHEBI:46398"/>
    </ligand>
</feature>
<feature type="binding site" evidence="1">
    <location>
        <begin position="14"/>
        <end position="19"/>
    </location>
    <ligand>
        <name>ATP</name>
        <dbReference type="ChEBI" id="CHEBI:30616"/>
    </ligand>
</feature>
<feature type="binding site" evidence="1">
    <location>
        <position position="71"/>
    </location>
    <ligand>
        <name>ATP</name>
        <dbReference type="ChEBI" id="CHEBI:30616"/>
    </ligand>
</feature>
<feature type="binding site" evidence="1">
    <location>
        <position position="71"/>
    </location>
    <ligand>
        <name>Mg(2+)</name>
        <dbReference type="ChEBI" id="CHEBI:18420"/>
    </ligand>
</feature>
<feature type="binding site" evidence="1">
    <location>
        <position position="140"/>
    </location>
    <ligand>
        <name>Mg(2+)</name>
        <dbReference type="ChEBI" id="CHEBI:18420"/>
    </ligand>
</feature>
<feature type="binding site" evidence="1">
    <location>
        <begin position="147"/>
        <end position="149"/>
    </location>
    <ligand>
        <name>CTP</name>
        <dbReference type="ChEBI" id="CHEBI:37563"/>
        <note>allosteric inhibitor</note>
    </ligand>
</feature>
<feature type="binding site" evidence="1">
    <location>
        <begin position="187"/>
        <end position="192"/>
    </location>
    <ligand>
        <name>CTP</name>
        <dbReference type="ChEBI" id="CHEBI:37563"/>
        <note>allosteric inhibitor</note>
    </ligand>
</feature>
<feature type="binding site" evidence="1">
    <location>
        <begin position="187"/>
        <end position="192"/>
    </location>
    <ligand>
        <name>UTP</name>
        <dbReference type="ChEBI" id="CHEBI:46398"/>
    </ligand>
</feature>
<feature type="binding site" evidence="1">
    <location>
        <position position="223"/>
    </location>
    <ligand>
        <name>CTP</name>
        <dbReference type="ChEBI" id="CHEBI:37563"/>
        <note>allosteric inhibitor</note>
    </ligand>
</feature>
<feature type="binding site" evidence="1">
    <location>
        <position position="223"/>
    </location>
    <ligand>
        <name>UTP</name>
        <dbReference type="ChEBI" id="CHEBI:46398"/>
    </ligand>
</feature>
<feature type="binding site" evidence="1">
    <location>
        <begin position="239"/>
        <end position="241"/>
    </location>
    <ligand>
        <name>ATP</name>
        <dbReference type="ChEBI" id="CHEBI:30616"/>
    </ligand>
</feature>
<feature type="binding site" evidence="1">
    <location>
        <position position="355"/>
    </location>
    <ligand>
        <name>L-glutamine</name>
        <dbReference type="ChEBI" id="CHEBI:58359"/>
    </ligand>
</feature>
<feature type="binding site" evidence="1">
    <location>
        <begin position="383"/>
        <end position="386"/>
    </location>
    <ligand>
        <name>L-glutamine</name>
        <dbReference type="ChEBI" id="CHEBI:58359"/>
    </ligand>
</feature>
<feature type="binding site" evidence="1">
    <location>
        <position position="406"/>
    </location>
    <ligand>
        <name>L-glutamine</name>
        <dbReference type="ChEBI" id="CHEBI:58359"/>
    </ligand>
</feature>
<feature type="binding site" evidence="1">
    <location>
        <position position="471"/>
    </location>
    <ligand>
        <name>L-glutamine</name>
        <dbReference type="ChEBI" id="CHEBI:58359"/>
    </ligand>
</feature>
<sequence length="544" mass="59756">MIRYIFITGGVVSSLGKGIASASLGALLQSRGYRVRLRKLDPYLNVDPGTMSPRQHGEVYVTDDGAETDLDLGHYERFTGVSARQSDNITTGRIYQRIIEKERRGDYLGATIQVIPHVTNDIKEFVLSDPGEGVDFVLCEIGGTVGDIEGLPFFEAIRQLGQELGPQRACFIHLTLLPYIPAAGEMKTKPTQHSVKELRSIGIQPQILLCRCDRPIPVNEKGKIASFCNVRLASVIEARDVGHIYDVPMAYHAEGLDSEVLSHFGITDAPPPDLSSWQRIAQTIKNPDGQVTIGLVGKYTDVPDAYKSVSEALGHGGLANKVKVDIRFVDSEKFDDPDAALEDLDGVHGILLPGGFGERGAHGKMRVARYARERNMPCFGICYGMQLSVVEAARNLAGIKNASTSEFGPTKEPVVGLMEEWTKGNEKVTRDASTDLGGTMRLGAYPARLKEGSMVAQVYGSLEISERHRHRYEVNASYIERLEKAGMIFSGMSPDGRLPEIVELEGHPWFIGVQFHPELKSRPFEPHPLFASFIAAAVKQSRLV</sequence>